<accession>Q3KLP3</accession>
<sequence length="444" mass="48470">MPGIKVFGETVLRGSVRVSGAKNATTKLLVASLLSDQRTILKNVPNIEDVRQTVDLCRVLGAIVEWDQQAQVIEIHTPRILLSKVPPQFSCVNRIPILLLGALLRRCPYGIFVPILGGDAIGPRTLHFHLEGLKKLGAEIVISDEGYWASAPNGLVGAHITLPYPSVGATENLILASVGAQGRTIIKNAALEVEIIDLIVFLQKAGMEITTDNDKTIEIFGCQDFYSVEHSIIPDKIEAASFGMAAVVSQGRIFVEQARHEHMIPFLKVLRSIGGGFSVHENGIEFFYDKPLKGGVLLETDVHPGFITDWQQPFAVLLSQSEGCSVIHETVHENRLGYLKGLVKMGAHCDLFHECLSAKSCRYSTGNHPHSAVIHGPTPLQATDLVIPDLRAGFAYVMAALITEGGASWIENTEMLDRGYTDWRGKLERLGAKVLARDSVSVYV</sequence>
<organism>
    <name type="scientific">Chlamydia trachomatis serovar A (strain ATCC VR-571B / DSM 19440 / HAR-13)</name>
    <dbReference type="NCBI Taxonomy" id="315277"/>
    <lineage>
        <taxon>Bacteria</taxon>
        <taxon>Pseudomonadati</taxon>
        <taxon>Chlamydiota</taxon>
        <taxon>Chlamydiia</taxon>
        <taxon>Chlamydiales</taxon>
        <taxon>Chlamydiaceae</taxon>
        <taxon>Chlamydia/Chlamydophila group</taxon>
        <taxon>Chlamydia</taxon>
    </lineage>
</organism>
<feature type="chain" id="PRO_0000231187" description="UDP-N-acetylglucosamine 1-carboxyvinyltransferase">
    <location>
        <begin position="1"/>
        <end position="444"/>
    </location>
</feature>
<feature type="active site" description="Proton donor" evidence="1">
    <location>
        <position position="119"/>
    </location>
</feature>
<feature type="binding site" evidence="1">
    <location>
        <begin position="22"/>
        <end position="23"/>
    </location>
    <ligand>
        <name>phosphoenolpyruvate</name>
        <dbReference type="ChEBI" id="CHEBI:58702"/>
    </ligand>
</feature>
<feature type="binding site" evidence="1">
    <location>
        <position position="94"/>
    </location>
    <ligand>
        <name>UDP-N-acetyl-alpha-D-glucosamine</name>
        <dbReference type="ChEBI" id="CHEBI:57705"/>
    </ligand>
</feature>
<feature type="binding site" evidence="1">
    <location>
        <position position="309"/>
    </location>
    <ligand>
        <name>UDP-N-acetyl-alpha-D-glucosamine</name>
        <dbReference type="ChEBI" id="CHEBI:57705"/>
    </ligand>
</feature>
<feature type="binding site" evidence="1">
    <location>
        <position position="331"/>
    </location>
    <ligand>
        <name>UDP-N-acetyl-alpha-D-glucosamine</name>
        <dbReference type="ChEBI" id="CHEBI:57705"/>
    </ligand>
</feature>
<protein>
    <recommendedName>
        <fullName evidence="1">UDP-N-acetylglucosamine 1-carboxyvinyltransferase</fullName>
        <ecNumber evidence="1">2.5.1.7</ecNumber>
    </recommendedName>
    <alternativeName>
        <fullName evidence="1">Enoylpyruvate transferase</fullName>
    </alternativeName>
    <alternativeName>
        <fullName evidence="1">UDP-N-acetylglucosamine enolpyruvyl transferase</fullName>
        <shortName evidence="1">EPT</shortName>
    </alternativeName>
</protein>
<keyword id="KW-0131">Cell cycle</keyword>
<keyword id="KW-0132">Cell division</keyword>
<keyword id="KW-0133">Cell shape</keyword>
<keyword id="KW-0961">Cell wall biogenesis/degradation</keyword>
<keyword id="KW-0963">Cytoplasm</keyword>
<keyword id="KW-0573">Peptidoglycan synthesis</keyword>
<keyword id="KW-0808">Transferase</keyword>
<gene>
    <name evidence="1" type="primary">murA</name>
    <name type="ordered locus">CTA_0497</name>
</gene>
<proteinExistence type="inferred from homology"/>
<dbReference type="EC" id="2.5.1.7" evidence="1"/>
<dbReference type="EMBL" id="CP000051">
    <property type="protein sequence ID" value="AAX50729.1"/>
    <property type="molecule type" value="Genomic_DNA"/>
</dbReference>
<dbReference type="RefSeq" id="WP_011324742.1">
    <property type="nucleotide sequence ID" value="NC_007429.1"/>
</dbReference>
<dbReference type="SMR" id="Q3KLP3"/>
<dbReference type="KEGG" id="cta:CTA_0497"/>
<dbReference type="HOGENOM" id="CLU_027387_0_0_0"/>
<dbReference type="UniPathway" id="UPA00219"/>
<dbReference type="Proteomes" id="UP000002532">
    <property type="component" value="Chromosome"/>
</dbReference>
<dbReference type="GO" id="GO:0005737">
    <property type="term" value="C:cytoplasm"/>
    <property type="evidence" value="ECO:0007669"/>
    <property type="project" value="UniProtKB-SubCell"/>
</dbReference>
<dbReference type="GO" id="GO:0008760">
    <property type="term" value="F:UDP-N-acetylglucosamine 1-carboxyvinyltransferase activity"/>
    <property type="evidence" value="ECO:0007669"/>
    <property type="project" value="UniProtKB-UniRule"/>
</dbReference>
<dbReference type="GO" id="GO:0051301">
    <property type="term" value="P:cell division"/>
    <property type="evidence" value="ECO:0007669"/>
    <property type="project" value="UniProtKB-KW"/>
</dbReference>
<dbReference type="GO" id="GO:0071555">
    <property type="term" value="P:cell wall organization"/>
    <property type="evidence" value="ECO:0007669"/>
    <property type="project" value="UniProtKB-KW"/>
</dbReference>
<dbReference type="GO" id="GO:0009252">
    <property type="term" value="P:peptidoglycan biosynthetic process"/>
    <property type="evidence" value="ECO:0007669"/>
    <property type="project" value="UniProtKB-UniRule"/>
</dbReference>
<dbReference type="GO" id="GO:0008360">
    <property type="term" value="P:regulation of cell shape"/>
    <property type="evidence" value="ECO:0007669"/>
    <property type="project" value="UniProtKB-KW"/>
</dbReference>
<dbReference type="GO" id="GO:0019277">
    <property type="term" value="P:UDP-N-acetylgalactosamine biosynthetic process"/>
    <property type="evidence" value="ECO:0007669"/>
    <property type="project" value="InterPro"/>
</dbReference>
<dbReference type="CDD" id="cd01555">
    <property type="entry name" value="UdpNAET"/>
    <property type="match status" value="1"/>
</dbReference>
<dbReference type="Gene3D" id="3.65.10.10">
    <property type="entry name" value="Enolpyruvate transferase domain"/>
    <property type="match status" value="2"/>
</dbReference>
<dbReference type="HAMAP" id="MF_00111">
    <property type="entry name" value="MurA"/>
    <property type="match status" value="1"/>
</dbReference>
<dbReference type="InterPro" id="IPR001986">
    <property type="entry name" value="Enolpyruvate_Tfrase_dom"/>
</dbReference>
<dbReference type="InterPro" id="IPR036968">
    <property type="entry name" value="Enolpyruvate_Tfrase_sf"/>
</dbReference>
<dbReference type="InterPro" id="IPR050068">
    <property type="entry name" value="MurA_subfamily"/>
</dbReference>
<dbReference type="InterPro" id="IPR013792">
    <property type="entry name" value="RNA3'P_cycl/enolpyr_Trfase_a/b"/>
</dbReference>
<dbReference type="InterPro" id="IPR005750">
    <property type="entry name" value="UDP_GlcNAc_COvinyl_MurA"/>
</dbReference>
<dbReference type="NCBIfam" id="TIGR01072">
    <property type="entry name" value="murA"/>
    <property type="match status" value="1"/>
</dbReference>
<dbReference type="NCBIfam" id="NF006873">
    <property type="entry name" value="PRK09369.1"/>
    <property type="match status" value="1"/>
</dbReference>
<dbReference type="PANTHER" id="PTHR43783">
    <property type="entry name" value="UDP-N-ACETYLGLUCOSAMINE 1-CARBOXYVINYLTRANSFERASE"/>
    <property type="match status" value="1"/>
</dbReference>
<dbReference type="PANTHER" id="PTHR43783:SF1">
    <property type="entry name" value="UDP-N-ACETYLGLUCOSAMINE 1-CARBOXYVINYLTRANSFERASE"/>
    <property type="match status" value="1"/>
</dbReference>
<dbReference type="Pfam" id="PF00275">
    <property type="entry name" value="EPSP_synthase"/>
    <property type="match status" value="1"/>
</dbReference>
<dbReference type="SUPFAM" id="SSF55205">
    <property type="entry name" value="EPT/RTPC-like"/>
    <property type="match status" value="1"/>
</dbReference>
<comment type="function">
    <text evidence="1">Cell wall formation. Adds enolpyruvyl to UDP-N-acetylglucosamine.</text>
</comment>
<comment type="catalytic activity">
    <reaction evidence="1">
        <text>phosphoenolpyruvate + UDP-N-acetyl-alpha-D-glucosamine = UDP-N-acetyl-3-O-(1-carboxyvinyl)-alpha-D-glucosamine + phosphate</text>
        <dbReference type="Rhea" id="RHEA:18681"/>
        <dbReference type="ChEBI" id="CHEBI:43474"/>
        <dbReference type="ChEBI" id="CHEBI:57705"/>
        <dbReference type="ChEBI" id="CHEBI:58702"/>
        <dbReference type="ChEBI" id="CHEBI:68483"/>
        <dbReference type="EC" id="2.5.1.7"/>
    </reaction>
</comment>
<comment type="pathway">
    <text evidence="1">Cell wall biogenesis; peptidoglycan biosynthesis.</text>
</comment>
<comment type="subcellular location">
    <subcellularLocation>
        <location evidence="1">Cytoplasm</location>
    </subcellularLocation>
</comment>
<comment type="similarity">
    <text evidence="1">Belongs to the EPSP synthase family. MurA subfamily.</text>
</comment>
<name>MURA_CHLTA</name>
<evidence type="ECO:0000255" key="1">
    <source>
        <dbReference type="HAMAP-Rule" id="MF_00111"/>
    </source>
</evidence>
<reference key="1">
    <citation type="journal article" date="2005" name="Infect. Immun.">
        <title>Comparative genomic analysis of Chlamydia trachomatis oculotropic and genitotropic strains.</title>
        <authorList>
            <person name="Carlson J.H."/>
            <person name="Porcella S.F."/>
            <person name="McClarty G."/>
            <person name="Caldwell H.D."/>
        </authorList>
    </citation>
    <scope>NUCLEOTIDE SEQUENCE [LARGE SCALE GENOMIC DNA]</scope>
    <source>
        <strain>ATCC VR-571B / DSM 19440 / HAR-13</strain>
    </source>
</reference>